<sequence>MPQISRYSDEQVEQLLAELLNVLEKHKAPTDLSLMVSGNMVTNLINTSIAPAQRQAIANSFARALQSSINEDKAH</sequence>
<accession>Q32HY7</accession>
<gene>
    <name evidence="1" type="primary">yejL</name>
    <name type="ordered locus">SDY_0892</name>
</gene>
<name>YEJL_SHIDS</name>
<reference key="1">
    <citation type="journal article" date="2005" name="Nucleic Acids Res.">
        <title>Genome dynamics and diversity of Shigella species, the etiologic agents of bacillary dysentery.</title>
        <authorList>
            <person name="Yang F."/>
            <person name="Yang J."/>
            <person name="Zhang X."/>
            <person name="Chen L."/>
            <person name="Jiang Y."/>
            <person name="Yan Y."/>
            <person name="Tang X."/>
            <person name="Wang J."/>
            <person name="Xiong Z."/>
            <person name="Dong J."/>
            <person name="Xue Y."/>
            <person name="Zhu Y."/>
            <person name="Xu X."/>
            <person name="Sun L."/>
            <person name="Chen S."/>
            <person name="Nie H."/>
            <person name="Peng J."/>
            <person name="Xu J."/>
            <person name="Wang Y."/>
            <person name="Yuan Z."/>
            <person name="Wen Y."/>
            <person name="Yao Z."/>
            <person name="Shen Y."/>
            <person name="Qiang B."/>
            <person name="Hou Y."/>
            <person name="Yu J."/>
            <person name="Jin Q."/>
        </authorList>
    </citation>
    <scope>NUCLEOTIDE SEQUENCE [LARGE SCALE GENOMIC DNA]</scope>
    <source>
        <strain>Sd197</strain>
    </source>
</reference>
<protein>
    <recommendedName>
        <fullName evidence="1">UPF0352 protein YejL</fullName>
    </recommendedName>
</protein>
<dbReference type="EMBL" id="CP000034">
    <property type="protein sequence ID" value="ABB61068.1"/>
    <property type="molecule type" value="Genomic_DNA"/>
</dbReference>
<dbReference type="RefSeq" id="WP_001135670.1">
    <property type="nucleotide sequence ID" value="NC_007606.1"/>
</dbReference>
<dbReference type="RefSeq" id="YP_402559.1">
    <property type="nucleotide sequence ID" value="NC_007606.1"/>
</dbReference>
<dbReference type="SMR" id="Q32HY7"/>
<dbReference type="STRING" id="300267.SDY_0892"/>
<dbReference type="EnsemblBacteria" id="ABB61068">
    <property type="protein sequence ID" value="ABB61068"/>
    <property type="gene ID" value="SDY_0892"/>
</dbReference>
<dbReference type="KEGG" id="sdy:SDY_0892"/>
<dbReference type="PATRIC" id="fig|300267.13.peg.1032"/>
<dbReference type="HOGENOM" id="CLU_175457_0_0_6"/>
<dbReference type="Proteomes" id="UP000002716">
    <property type="component" value="Chromosome"/>
</dbReference>
<dbReference type="FunFam" id="1.10.3390.10:FF:000001">
    <property type="entry name" value="UPF0352 protein YejL"/>
    <property type="match status" value="1"/>
</dbReference>
<dbReference type="Gene3D" id="1.10.3390.10">
    <property type="entry name" value="YejL-like"/>
    <property type="match status" value="1"/>
</dbReference>
<dbReference type="HAMAP" id="MF_00816">
    <property type="entry name" value="UPF0352"/>
    <property type="match status" value="1"/>
</dbReference>
<dbReference type="InterPro" id="IPR009857">
    <property type="entry name" value="UPF0352"/>
</dbReference>
<dbReference type="InterPro" id="IPR023202">
    <property type="entry name" value="YejL_sf"/>
</dbReference>
<dbReference type="NCBIfam" id="NF010242">
    <property type="entry name" value="PRK13689.1"/>
    <property type="match status" value="1"/>
</dbReference>
<dbReference type="Pfam" id="PF07208">
    <property type="entry name" value="DUF1414"/>
    <property type="match status" value="1"/>
</dbReference>
<dbReference type="PIRSF" id="PIRSF006188">
    <property type="entry name" value="UCP006188"/>
    <property type="match status" value="1"/>
</dbReference>
<dbReference type="SUPFAM" id="SSF158651">
    <property type="entry name" value="YejL-like"/>
    <property type="match status" value="1"/>
</dbReference>
<evidence type="ECO:0000255" key="1">
    <source>
        <dbReference type="HAMAP-Rule" id="MF_00816"/>
    </source>
</evidence>
<feature type="chain" id="PRO_1000062315" description="UPF0352 protein YejL">
    <location>
        <begin position="1"/>
        <end position="75"/>
    </location>
</feature>
<organism>
    <name type="scientific">Shigella dysenteriae serotype 1 (strain Sd197)</name>
    <dbReference type="NCBI Taxonomy" id="300267"/>
    <lineage>
        <taxon>Bacteria</taxon>
        <taxon>Pseudomonadati</taxon>
        <taxon>Pseudomonadota</taxon>
        <taxon>Gammaproteobacteria</taxon>
        <taxon>Enterobacterales</taxon>
        <taxon>Enterobacteriaceae</taxon>
        <taxon>Shigella</taxon>
    </lineage>
</organism>
<keyword id="KW-1185">Reference proteome</keyword>
<comment type="similarity">
    <text evidence="1">Belongs to the UPF0352 family.</text>
</comment>
<proteinExistence type="inferred from homology"/>